<keyword id="KW-0963">Cytoplasm</keyword>
<keyword id="KW-0704">Schiff base</keyword>
<keyword id="KW-0784">Thiamine biosynthesis</keyword>
<keyword id="KW-0808">Transferase</keyword>
<reference key="1">
    <citation type="journal article" date="2007" name="Proc. Natl. Acad. Sci. U.S.A.">
        <title>Genome and proteome of long-chain alkane degrading Geobacillus thermodenitrificans NG80-2 isolated from a deep-subsurface oil reservoir.</title>
        <authorList>
            <person name="Feng L."/>
            <person name="Wang W."/>
            <person name="Cheng J."/>
            <person name="Ren Y."/>
            <person name="Zhao G."/>
            <person name="Gao C."/>
            <person name="Tang Y."/>
            <person name="Liu X."/>
            <person name="Han W."/>
            <person name="Peng X."/>
            <person name="Liu R."/>
            <person name="Wang L."/>
        </authorList>
    </citation>
    <scope>NUCLEOTIDE SEQUENCE [LARGE SCALE GENOMIC DNA]</scope>
    <source>
        <strain>NG80-2</strain>
    </source>
</reference>
<evidence type="ECO:0000255" key="1">
    <source>
        <dbReference type="HAMAP-Rule" id="MF_00443"/>
    </source>
</evidence>
<comment type="function">
    <text evidence="1">Catalyzes the rearrangement of 1-deoxy-D-xylulose 5-phosphate (DXP) to produce the thiazole phosphate moiety of thiamine. Sulfur is provided by the thiocarboxylate moiety of the carrier protein ThiS. In vitro, sulfur can be provided by H(2)S.</text>
</comment>
<comment type="catalytic activity">
    <reaction evidence="1">
        <text>[ThiS sulfur-carrier protein]-C-terminal-Gly-aminoethanethioate + 2-iminoacetate + 1-deoxy-D-xylulose 5-phosphate = [ThiS sulfur-carrier protein]-C-terminal Gly-Gly + 2-[(2R,5Z)-2-carboxy-4-methylthiazol-5(2H)-ylidene]ethyl phosphate + 2 H2O + H(+)</text>
        <dbReference type="Rhea" id="RHEA:26297"/>
        <dbReference type="Rhea" id="RHEA-COMP:12909"/>
        <dbReference type="Rhea" id="RHEA-COMP:19908"/>
        <dbReference type="ChEBI" id="CHEBI:15377"/>
        <dbReference type="ChEBI" id="CHEBI:15378"/>
        <dbReference type="ChEBI" id="CHEBI:57792"/>
        <dbReference type="ChEBI" id="CHEBI:62899"/>
        <dbReference type="ChEBI" id="CHEBI:77846"/>
        <dbReference type="ChEBI" id="CHEBI:90778"/>
        <dbReference type="ChEBI" id="CHEBI:232372"/>
        <dbReference type="EC" id="2.8.1.10"/>
    </reaction>
</comment>
<comment type="pathway">
    <text evidence="1">Cofactor biosynthesis; thiamine diphosphate biosynthesis.</text>
</comment>
<comment type="subunit">
    <text evidence="1">Homotetramer. Forms heterodimers with either ThiH or ThiS.</text>
</comment>
<comment type="subcellular location">
    <subcellularLocation>
        <location evidence="1">Cytoplasm</location>
    </subcellularLocation>
</comment>
<comment type="similarity">
    <text evidence="1">Belongs to the ThiG family.</text>
</comment>
<name>THIG_GEOTN</name>
<feature type="chain" id="PRO_1000026008" description="Thiazole synthase">
    <location>
        <begin position="1"/>
        <end position="255"/>
    </location>
</feature>
<feature type="active site" description="Schiff-base intermediate with DXP" evidence="1">
    <location>
        <position position="96"/>
    </location>
</feature>
<feature type="binding site" evidence="1">
    <location>
        <position position="157"/>
    </location>
    <ligand>
        <name>1-deoxy-D-xylulose 5-phosphate</name>
        <dbReference type="ChEBI" id="CHEBI:57792"/>
    </ligand>
</feature>
<feature type="binding site" evidence="1">
    <location>
        <begin position="183"/>
        <end position="184"/>
    </location>
    <ligand>
        <name>1-deoxy-D-xylulose 5-phosphate</name>
        <dbReference type="ChEBI" id="CHEBI:57792"/>
    </ligand>
</feature>
<feature type="binding site" evidence="1">
    <location>
        <begin position="205"/>
        <end position="206"/>
    </location>
    <ligand>
        <name>1-deoxy-D-xylulose 5-phosphate</name>
        <dbReference type="ChEBI" id="CHEBI:57792"/>
    </ligand>
</feature>
<organism>
    <name type="scientific">Geobacillus thermodenitrificans (strain NG80-2)</name>
    <dbReference type="NCBI Taxonomy" id="420246"/>
    <lineage>
        <taxon>Bacteria</taxon>
        <taxon>Bacillati</taxon>
        <taxon>Bacillota</taxon>
        <taxon>Bacilli</taxon>
        <taxon>Bacillales</taxon>
        <taxon>Anoxybacillaceae</taxon>
        <taxon>Geobacillus</taxon>
    </lineage>
</organism>
<proteinExistence type="inferred from homology"/>
<protein>
    <recommendedName>
        <fullName evidence="1">Thiazole synthase</fullName>
        <ecNumber evidence="1">2.8.1.10</ecNumber>
    </recommendedName>
</protein>
<gene>
    <name evidence="1" type="primary">thiG</name>
    <name type="ordered locus">GTNG_0538</name>
</gene>
<sequence length="255" mass="26927">MLKIGPYEFSSRLLLGTGKYPSLDVQKEAVEASGAEILTFAVRRMNIFSPEQPNFLEQLDLSKYKLLPNTAGAKTAEEAVRIARLAKASGLCDMIKVEVIGCDKTLLPDPVETLKAAEMLLEEGFIVLPYTSDDVVLARRLQELGCHAVMPGASPIGSGQGIINPLNLSFIIEQATVPVIVDAGIGGPADAVLAMELGADGVLLNTAVSGAADPVKMAKAMKLAIEAGRLGYEAGRIPKKRYASASSPMEGMSVV</sequence>
<dbReference type="EC" id="2.8.1.10" evidence="1"/>
<dbReference type="EMBL" id="CP000557">
    <property type="protein sequence ID" value="ABO65920.1"/>
    <property type="molecule type" value="Genomic_DNA"/>
</dbReference>
<dbReference type="RefSeq" id="WP_011886848.1">
    <property type="nucleotide sequence ID" value="NC_009328.1"/>
</dbReference>
<dbReference type="SMR" id="A4IKR6"/>
<dbReference type="GeneID" id="87621834"/>
<dbReference type="KEGG" id="gtn:GTNG_0538"/>
<dbReference type="eggNOG" id="COG2022">
    <property type="taxonomic scope" value="Bacteria"/>
</dbReference>
<dbReference type="HOGENOM" id="CLU_062233_1_0_9"/>
<dbReference type="UniPathway" id="UPA00060"/>
<dbReference type="Proteomes" id="UP000001578">
    <property type="component" value="Chromosome"/>
</dbReference>
<dbReference type="GO" id="GO:0005737">
    <property type="term" value="C:cytoplasm"/>
    <property type="evidence" value="ECO:0007669"/>
    <property type="project" value="UniProtKB-SubCell"/>
</dbReference>
<dbReference type="GO" id="GO:1990107">
    <property type="term" value="F:thiazole synthase activity"/>
    <property type="evidence" value="ECO:0007669"/>
    <property type="project" value="UniProtKB-EC"/>
</dbReference>
<dbReference type="GO" id="GO:0009229">
    <property type="term" value="P:thiamine diphosphate biosynthetic process"/>
    <property type="evidence" value="ECO:0007669"/>
    <property type="project" value="UniProtKB-UniRule"/>
</dbReference>
<dbReference type="CDD" id="cd04728">
    <property type="entry name" value="ThiG"/>
    <property type="match status" value="1"/>
</dbReference>
<dbReference type="FunFam" id="3.20.20.70:FF:000049">
    <property type="entry name" value="Thiazole synthase"/>
    <property type="match status" value="1"/>
</dbReference>
<dbReference type="Gene3D" id="3.20.20.70">
    <property type="entry name" value="Aldolase class I"/>
    <property type="match status" value="1"/>
</dbReference>
<dbReference type="HAMAP" id="MF_00443">
    <property type="entry name" value="ThiG"/>
    <property type="match status" value="1"/>
</dbReference>
<dbReference type="InterPro" id="IPR013785">
    <property type="entry name" value="Aldolase_TIM"/>
</dbReference>
<dbReference type="InterPro" id="IPR033983">
    <property type="entry name" value="Thiazole_synthase_ThiG"/>
</dbReference>
<dbReference type="InterPro" id="IPR008867">
    <property type="entry name" value="ThiG"/>
</dbReference>
<dbReference type="PANTHER" id="PTHR34266">
    <property type="entry name" value="THIAZOLE SYNTHASE"/>
    <property type="match status" value="1"/>
</dbReference>
<dbReference type="PANTHER" id="PTHR34266:SF2">
    <property type="entry name" value="THIAZOLE SYNTHASE"/>
    <property type="match status" value="1"/>
</dbReference>
<dbReference type="Pfam" id="PF05690">
    <property type="entry name" value="ThiG"/>
    <property type="match status" value="1"/>
</dbReference>
<dbReference type="SUPFAM" id="SSF110399">
    <property type="entry name" value="ThiG-like"/>
    <property type="match status" value="1"/>
</dbReference>
<accession>A4IKR6</accession>